<accession>Q8VEK3</accession>
<accession>G3XA10</accession>
<accession>Q9R205</accession>
<gene>
    <name evidence="18" type="primary">Hnrnpu</name>
    <name evidence="18" type="synonym">Hnrpu</name>
</gene>
<sequence length="800" mass="87918">MSSSPVNVKKLKVSELKEELKKRRLSDKGLKADLMDRLQAALDNEAGGRPAMEPGNGSLDLGGDAAGRSGAGLEQEAAAGAEDDEEEEGIAALDGDQMELGEENGAAGAADAGAMEEEEAASEDENGDDQGFQEGEDELGDEEEGAGDENGHGEQQSQPPAAAAQQQPSQQRGAGKEAAGKSSGPTSLFAVTVAPPGARQGQQQAGGDGKTEQKGGDKKRGVKRPREDHGRGYFEYIEENKYSRAKSPQPPVEEEDEHFDDTVVCLDTYNCDLHFKISRDRLSASSLTMESFAFLWAGGRASYGVSKGKVCFEMKVTEKIPVRHLYTKDIDIHEVRIGWSLTTSGMLLGEEEFSYGYSLKGIKTCNCETEDYGEKFDENDVITCFANFETDEVELSYAKNGQDLGVAFKISKEVLADRPLFPHVLCHNCAVEFNFGQKEKPYFPIPEDCTFIQNVPLEDRVRGPKGPEEKKDCEVVMMIGLPGAGKTTWVTKHAAENPGKYNILGTNTIMDKMMVAGFKKQMADTGKLNTLLQRAPQCLGKFIEIAARKKRNFILDQTNVSAAAQRRKMCLFAGFQRKAVVVCPKDEDYKQRTQKKAEVEGKDLPEHAVLKMKGNFTLPEVAECFDEITYVELQKEEAQKLLEQYKEESKKALPPEKKQNTGSKKSNKNKSGKNQFNRGGGHRGRGGFNMRGGNFRGGAPGNRGGYNRRGNMPQRGGGGGSGGIGYPYPRGPVFPGRGGYSNRGNYNRGGMPNRGNYNQNFRGRGNNRGYKNQSQGYNQWQQGQFWGQKPWSQHYHQGYY</sequence>
<name>HNRPU_MOUSE</name>
<comment type="function">
    <text evidence="1 7 8 10 11 12 14 15">DNA- and RNA-binding protein involved in several cellular processes such as nuclear chromatin organization, telomere-length regulation, transcription, mRNA alternative splicing and stability, Xist-mediated transcriptional silencing and mitotic cell progression (PubMed:20833368, PubMed:21235343, PubMed:22162999, PubMed:26244333). Plays a role in the regulation of interphase large-scale gene-rich chromatin organization through chromatin-associated RNAs (caRNAs) in a transcription-dependent manner, and thereby maintains genomic stability (By similarity). Required for the localization of the long non-coding Xist RNA on the inactive chromosome X (Xi) and the subsequent initiation and maintenance of X-linked transcriptional gene silencing during X-inactivation (PubMed:20833368, PubMed:26244333). Plays a role as a RNA polymerase II (Pol II) holoenzyme transcription regulator (PubMed:21235343, PubMed:22162999). Promotes transcription initiation by direct association with the core-TFIIH basal transcription factor complex for the assembly of a functional pre-initiation complex with Pol II in a actin-dependent manner. Blocks Pol II transcription elongation activity by inhibiting the C-terminal domain (CTD) phosphorylation of Pol II and dissociates from Pol II pre-initiation complex prior to productive transcription elongation. Positively regulates CBX5-induced transcriptional gene silencing and retention of CBX5 in the nucleus. Negatively regulates glucocorticoid-mediated transcriptional activation (By similarity). Key regulator of transcription initiation and elongation in embryonic stem cells upon leukemia inhibitory factor (LIF) signaling (PubMed:21235343). Involved in the long non-coding RNA H19-mediated Pol II transcriptional repression (By similarity). Participates in the circadian regulation of the core clock component BMAL1 transcription (PubMed:18332112). Plays a role in the regulation of telomere length. Plays a role as a global pre-mRNA alternative splicing modulator by regulating U2 small nuclear ribonucleoprotein (snRNP) biogenesis. Plays a role in mRNA stability. Component of the CRD-mediated complex that promotes MYC mRNA stabilization. Enhances the expression of specific genes, such as tumor necrosis factor TNFA, by regulating mRNA stability, possibly through binding to the 3'-untranslated region (UTR). Plays a role in mitotic cell cycle regulation. Involved in the formation of stable mitotic spindle microtubules (MTs) attachment to kinetochore, spindle organization and chromosome congression. Phosphorylation at Ser-58 by PLK1 is required for chromosome alignement and segregation and progression through mitosis. Also contributes to the targeting of AURKA to mitotic spindle MTs. Binds to double- and single-stranded DNA and RNA, poly(A), poly(C) and poly(G) oligoribonucleotides. Binds to chromatin-associated RNAs (caRNAs). Associates with chromatin to scaffold/matrix attachment region (S/MAR) elements in a chromatin-associated RNAs (caRNAs)-dependent manner (By similarity). Binds (via RNA-binding RGG-box region) to the long non-coding Xist RNA; this binding is direct and bridges the Xist RNA and the inactive chromosome X (Xi) (PubMed:20833368, PubMed:26244333). Binds the long non-coding H19 RNA. Binds to SMN1/2 pre-mRNAs at G/U-rich regions. Binds to small nuclear RNAs (snRNAs). Binds to the 3'-UTR of TNFA mRNA (By similarity). Also negatively regulates embryonic stem cell differentiation upon LIF signaling (PubMed:21235343). Required for embryonic development (PubMed:16022389). Binds to brown fat long non-coding RNA 1 (Blnc1); facilitates the recruitment of Blnc1 by ZBTB7B required to drive brown and beige fat development and thermogenesis (PubMed:28784777).</text>
</comment>
<comment type="subunit">
    <text evidence="1 2 9 11 12 15">Oligomer (via ATPase domain and RNA-binding RGG-box region); oligomerization occurs upon ATP-binding in a chromatin-associated RNAs (caRNAs)- and transcription-dependent manner and is required for chromatin decompaction. ATP hydrolysis is required to cycle from an oligomeric to monomeric state to compact chromatin. Component of the coding region determinant (CRD)-mediated complex, composed of DHX9, HNRNPU, IGF2BP1, SYNCRIP and YBX1. Identified in the spliceosome C complex. Identified in a IGF2BP1-dependent mRNP granule complex containing untranslated mRNAs. Associates with heterogeneous nuclear ribonucleoprotein (hnRNP) particles (By similarity). Associates (via middle region) with the C-terminal domain (CTD) RNA polymerase II (Pol II) holoenzyme; this association occurs in a RNA-independent manner (PubMed:21235343). Associates (via middle region) with the core-TFIIH basal transcription factor complex; this association inhibits the CTD phosphorylation of RNA polymerase II holoenzyme by down-regulating TFIIH kinase activity. Associates with the telomerase holoenzyme complex. Associates with spindle microtubules (MTs) in a TPX2-dependent manner. Interacts (via C-terminus) with actin; this interaction is direct and mediates association with the phosphorylated CTD of RNA polymerase II and is disrupted in presence of the long non-coding H19 RNA. Interacts with AURKA. Interacts (via C-terminus) with CBX5; this interaction is, at least in part, RNA-dependent. Interacts with CR2 (By similarity). Interacts with CRY1 (PubMed:19129230). Interacts (via C-terminus) with EP300; this interaction enhances DNA-binding to nuclear scaffold/matrix attachment region (S/MAR) elements. Interacts with ERBB4. Interacts with GEMIN5. Interacts with IGF2BP1. Interacts with IGF2BP2 and IGF2BP3. Interacts with NCL; this interaction occurs during mitosis. Interacts (via C-terminus) with NR3C1 (via C-terminus). Interacts with PLK1; this interaction induces phosphorylation of HNRNPU at Ser-58 in mitosis. Interacts with POU3F4 (By similarity). Interacts with SMARCA4; this interaction occurs in embryonic stem cells and stimulates global Pol II-mediated transcription (PubMed:22162999). Interacts (via C-terminus) with TOP2A; this interaction protects the topoisomerase TOP2A from degradation and positively regulates the relaxation of supercoiled DNA by TOP2A in a RNA-dependent manner. Interacts with TPX2; this interaction recruits HNRNPU to spindle microtubules (MTs). Interacts with UBQLN2 (By similarity). Interacts (via RNA-binding RGG-box region) with ZBTB7B; the interaction facilitates the recruitment of long non-coding RNA Blnc1 by ZBTB7B (PubMed:28784777). Interacts with ERCC6 (By similarity).</text>
</comment>
<comment type="interaction">
    <interactant intactId="EBI-529674">
        <id>Q8VEK3</id>
    </interactant>
    <interactant intactId="EBI-1210244">
        <id>Q3TKT4</id>
        <label>Smarca4</label>
    </interactant>
    <organismsDiffer>false</organismsDiffer>
    <experiments>3</experiments>
</comment>
<comment type="subcellular location">
    <subcellularLocation>
        <location evidence="8 12">Nucleus</location>
    </subcellularLocation>
    <subcellularLocation>
        <location evidence="1">Nucleus matrix</location>
    </subcellularLocation>
    <subcellularLocation>
        <location evidence="10">Chromosome</location>
    </subcellularLocation>
    <subcellularLocation>
        <location evidence="1">Nucleus speckle</location>
    </subcellularLocation>
    <subcellularLocation>
        <location evidence="1">Cytoplasm</location>
        <location evidence="1">Cytoskeleton</location>
        <location evidence="1">Microtubule organizing center</location>
        <location evidence="1">Centrosome</location>
    </subcellularLocation>
    <subcellularLocation>
        <location evidence="1">Chromosome</location>
        <location evidence="1">Centromere</location>
        <location evidence="1">Kinetochore</location>
    </subcellularLocation>
    <subcellularLocation>
        <location evidence="1">Cytoplasm</location>
        <location evidence="1">Cytoskeleton</location>
        <location evidence="1">Spindle</location>
    </subcellularLocation>
    <subcellularLocation>
        <location evidence="1">Cytoplasm</location>
        <location evidence="1">Cytoskeleton</location>
        <location evidence="1">Spindle pole</location>
    </subcellularLocation>
    <subcellularLocation>
        <location evidence="1">Midbody</location>
    </subcellularLocation>
    <subcellularLocation>
        <location evidence="1">Cytoplasm</location>
    </subcellularLocation>
    <subcellularLocation>
        <location evidence="1">Cell surface</location>
    </subcellularLocation>
    <subcellularLocation>
        <location evidence="1">Cytoplasmic granule</location>
    </subcellularLocation>
    <text evidence="1 10 12">Localizes at inactive X chromosome (Xi) regions (PubMed:20833368). Localizes in the nucleus during interphase. At metaphase, localizes with mitotic spindle microtubules (MTs). At anaphase, localizes in the mitotic spindle midzone. Localizes in spindle MTs proximal to spindle poles in a TPX2- and AURKA-dependent manner. The Ser-58 phosphorylated form localizes to centrosomes during prophase and metaphase, to mitotic spindles in anaphase and to the midbody during cytokinesis (By similarity). Colocalizes with SMARCA4 in the nucleus (PubMed:22162999). Colocalizes with CBX5 in the nucleus. Colocalizes with NR3C1 in nuclear speckles. Localized in cytoplasmic ribonucleoprotein (RNP) granules containing untranslated mRNAs (By similarity).</text>
</comment>
<comment type="alternative products">
    <event type="alternative splicing"/>
    <isoform>
        <id>Q8VEK3-1</id>
        <name>1</name>
        <sequence type="displayed"/>
    </isoform>
    <isoform>
        <id>Q8VEK3-2</id>
        <name>2</name>
        <sequence type="described" ref="VSP_059004"/>
    </isoform>
</comment>
<comment type="domain">
    <text evidence="1 10">The SAP domain is necessary for specific binding to nuclear scaffold/matrix attachment region (S/MAR) elements in DNA. The RNA-binding RGG-box region is necessary for its association with inactive X chromosome (Xi) regions and to chromatin-associated RNAs (caRNAs) (By similarity). Both the DNA-binding domain SAP and the RNA-binding RGG-box region are necessary for the localization of Xist RNA on the Xi (PubMed:20833368). The ATPase and RNA-binding RGG-box regions are necessary for oligomerization (By similarity).</text>
</comment>
<comment type="PTM">
    <text evidence="1">Cleaved at Asp-94 by CASP3 during T-cell apoptosis, resulting in a loss of DNA- and chromatin-binding activities.</text>
</comment>
<comment type="PTM">
    <text evidence="1">Extensively phosphorylated. Phosphorylated on Ser-58 by PLK1 and dephosphorylated by protein phosphatase 2A (PP2A) in mitosis.</text>
</comment>
<comment type="PTM">
    <text>Arg-709 and Arg-715 are dimethylated, probably to asymmetric dimethylarginine.</text>
</comment>
<comment type="PTM">
    <text evidence="13">Citrullinated by PADI4.</text>
</comment>
<comment type="disruption phenotype">
    <text evidence="7">Mice exhibit early embryonic lethality between 9.5 and 11.5 dpc (PubMed:16022389). Mice show retarded development of embryonic ectoderm at 6.5 dpc and growth retardation beginning at 7.5 dpc (PubMed:16022389).</text>
</comment>
<proteinExistence type="evidence at protein level"/>
<feature type="initiator methionine" description="Removed" evidence="1">
    <location>
        <position position="1"/>
    </location>
</feature>
<feature type="chain" id="PRO_0000387947" description="Heterogeneous nuclear ribonucleoprotein U">
    <location>
        <begin position="2"/>
        <end position="800"/>
    </location>
</feature>
<feature type="domain" description="SAP" evidence="4 10">
    <location>
        <begin position="8"/>
        <end position="42"/>
    </location>
</feature>
<feature type="domain" description="B30.2/SPRY" evidence="5">
    <location>
        <begin position="244"/>
        <end position="440"/>
    </location>
</feature>
<feature type="region of interest" description="Disordered" evidence="6">
    <location>
        <begin position="41"/>
        <end position="257"/>
    </location>
</feature>
<feature type="region of interest" description="ATPase domain" evidence="1">
    <location>
        <begin position="464"/>
        <end position="648"/>
    </location>
</feature>
<feature type="region of interest" description="Actin-binding" evidence="1">
    <location>
        <begin position="587"/>
        <end position="602"/>
    </location>
</feature>
<feature type="region of interest" description="Disordered" evidence="6">
    <location>
        <begin position="647"/>
        <end position="729"/>
    </location>
</feature>
<feature type="region of interest" description="RNA-binding RGG-box" evidence="10 15">
    <location>
        <begin position="690"/>
        <end position="715"/>
    </location>
</feature>
<feature type="region of interest" description="Disordered" evidence="6">
    <location>
        <begin position="745"/>
        <end position="774"/>
    </location>
</feature>
<feature type="coiled-coil region" evidence="3">
    <location>
        <begin position="626"/>
        <end position="653"/>
    </location>
</feature>
<feature type="compositionally biased region" description="Low complexity" evidence="6">
    <location>
        <begin position="71"/>
        <end position="80"/>
    </location>
</feature>
<feature type="compositionally biased region" description="Low complexity" evidence="6">
    <location>
        <begin position="103"/>
        <end position="113"/>
    </location>
</feature>
<feature type="compositionally biased region" description="Acidic residues" evidence="6">
    <location>
        <begin position="114"/>
        <end position="128"/>
    </location>
</feature>
<feature type="compositionally biased region" description="Acidic residues" evidence="6">
    <location>
        <begin position="134"/>
        <end position="147"/>
    </location>
</feature>
<feature type="compositionally biased region" description="Low complexity" evidence="6">
    <location>
        <begin position="153"/>
        <end position="173"/>
    </location>
</feature>
<feature type="compositionally biased region" description="Low complexity" evidence="6">
    <location>
        <begin position="194"/>
        <end position="205"/>
    </location>
</feature>
<feature type="compositionally biased region" description="Basic and acidic residues" evidence="6">
    <location>
        <begin position="209"/>
        <end position="242"/>
    </location>
</feature>
<feature type="compositionally biased region" description="Basic and acidic residues" evidence="6">
    <location>
        <begin position="647"/>
        <end position="659"/>
    </location>
</feature>
<feature type="compositionally biased region" description="Gly residues" evidence="6">
    <location>
        <begin position="686"/>
        <end position="704"/>
    </location>
</feature>
<feature type="compositionally biased region" description="Gly residues" evidence="6">
    <location>
        <begin position="715"/>
        <end position="725"/>
    </location>
</feature>
<feature type="binding site" evidence="3">
    <location>
        <begin position="480"/>
        <end position="487"/>
    </location>
    <ligand>
        <name>ATP</name>
        <dbReference type="ChEBI" id="CHEBI:30616"/>
    </ligand>
</feature>
<feature type="site" description="Cleavage; by CASP3" evidence="1">
    <location>
        <begin position="94"/>
        <end position="95"/>
    </location>
</feature>
<feature type="modified residue" description="N-acetylserine" evidence="1">
    <location>
        <position position="2"/>
    </location>
</feature>
<feature type="modified residue" description="Phosphoserine" evidence="1">
    <location>
        <position position="4"/>
    </location>
</feature>
<feature type="modified residue" description="N6-acetyllysine" evidence="23">
    <location>
        <position position="17"/>
    </location>
</feature>
<feature type="modified residue" description="N6-acetyllysine" evidence="23">
    <location>
        <position position="21"/>
    </location>
</feature>
<feature type="modified residue" description="Phosphoserine" evidence="19 21 22">
    <location>
        <position position="58"/>
    </location>
</feature>
<feature type="modified residue" description="N6-acetyllysine" evidence="23">
    <location>
        <position position="181"/>
    </location>
</feature>
<feature type="modified residue" description="ADP-ribosylserine" evidence="1">
    <location>
        <position position="182"/>
    </location>
</feature>
<feature type="modified residue" description="Citrulline" evidence="13">
    <location>
        <position position="231"/>
    </location>
</feature>
<feature type="modified residue" description="N6-acetyllysine; alternate" evidence="23">
    <location>
        <position position="241"/>
    </location>
</feature>
<feature type="modified residue" description="Phosphotyrosine" evidence="20">
    <location>
        <position position="242"/>
    </location>
</feature>
<feature type="modified residue" description="Phosphoserine" evidence="1">
    <location>
        <position position="243"/>
    </location>
</feature>
<feature type="modified residue" description="Phosphoserine" evidence="19 21 22">
    <location>
        <position position="247"/>
    </location>
</feature>
<feature type="modified residue" description="Phosphothreonine" evidence="1">
    <location>
        <position position="262"/>
    </location>
</feature>
<feature type="modified residue" description="N6-acetyllysine" evidence="23">
    <location>
        <position position="328"/>
    </location>
</feature>
<feature type="modified residue" description="N6-acetyllysine; alternate" evidence="1">
    <location>
        <position position="492"/>
    </location>
</feature>
<feature type="modified residue" description="N6-acetyllysine; alternate" evidence="1">
    <location>
        <position position="500"/>
    </location>
</feature>
<feature type="modified residue" description="Phosphothreonine" evidence="1">
    <location>
        <position position="508"/>
    </location>
</feature>
<feature type="modified residue" description="N6-acetyllysine" evidence="1">
    <location>
        <position position="527"/>
    </location>
</feature>
<feature type="modified residue" description="N6-acetyllysine; alternate" evidence="1">
    <location>
        <position position="541"/>
    </location>
</feature>
<feature type="modified residue" description="Phosphothreonine" evidence="1">
    <location>
        <position position="558"/>
    </location>
</feature>
<feature type="modified residue" description="N6-acetyllysine; alternate" evidence="1">
    <location>
        <position position="611"/>
    </location>
</feature>
<feature type="modified residue" description="Omega-N-methylarginine" evidence="1">
    <location>
        <position position="678"/>
    </location>
</feature>
<feature type="modified residue" description="Asymmetric dimethylarginine" evidence="24">
    <location>
        <position position="691"/>
    </location>
</feature>
<feature type="modified residue" description="Asymmetric dimethylarginine" evidence="24">
    <location>
        <position position="696"/>
    </location>
</feature>
<feature type="modified residue" description="Asymmetric dimethylarginine" evidence="24">
    <location>
        <position position="703"/>
    </location>
</feature>
<feature type="modified residue" description="Asymmetric dimethylarginine; alternate" evidence="24">
    <location>
        <position position="709"/>
    </location>
</feature>
<feature type="modified residue" description="Omega-N-methylarginine; alternate" evidence="24">
    <location>
        <position position="709"/>
    </location>
</feature>
<feature type="modified residue" description="Asymmetric dimethylarginine; alternate" evidence="24">
    <location>
        <position position="715"/>
    </location>
</feature>
<feature type="modified residue" description="Omega-N-methylarginine; alternate" evidence="24">
    <location>
        <position position="715"/>
    </location>
</feature>
<feature type="modified residue" description="Asymmetric dimethylarginine" evidence="1">
    <location>
        <position position="730"/>
    </location>
</feature>
<feature type="modified residue" description="Asymmetric dimethylarginine" evidence="24">
    <location>
        <position position="737"/>
    </location>
</feature>
<feature type="modified residue" description="N6-acetyllysine; alternate" evidence="1">
    <location>
        <position position="789"/>
    </location>
</feature>
<feature type="cross-link" description="Glycyl lysine isopeptide (Lys-Gly) (interchain with G-Cter in SUMO1); alternate" evidence="1">
    <location>
        <position position="241"/>
    </location>
</feature>
<feature type="cross-link" description="Glycyl lysine isopeptide (Lys-Gly) (interchain with G-Cter in SUMO2); alternate" evidence="1">
    <location>
        <position position="241"/>
    </location>
</feature>
<feature type="cross-link" description="Glycyl lysine isopeptide (Lys-Gly) (interchain with G-Cter in SUMO2)" evidence="1">
    <location>
        <position position="471"/>
    </location>
</feature>
<feature type="cross-link" description="Glycyl lysine isopeptide (Lys-Gly) (interchain with G-Cter in SUMO2); alternate" evidence="1">
    <location>
        <position position="492"/>
    </location>
</feature>
<feature type="cross-link" description="Glycyl lysine isopeptide (Lys-Gly) (interchain with G-Cter in SUMO2); alternate" evidence="1">
    <location>
        <position position="500"/>
    </location>
</feature>
<feature type="cross-link" description="Glycyl lysine isopeptide (Lys-Gly) (interchain with G-Cter in SUMO2)" evidence="1">
    <location>
        <position position="512"/>
    </location>
</feature>
<feature type="cross-link" description="Glycyl lysine isopeptide (Lys-Gly) (interchain with G-Cter in SUMO2); alternate" evidence="1">
    <location>
        <position position="541"/>
    </location>
</feature>
<feature type="cross-link" description="Glycyl lysine isopeptide (Lys-Gly) (interchain with G-Cter in SUMO2)" evidence="1">
    <location>
        <position position="550"/>
    </location>
</feature>
<feature type="cross-link" description="Glycyl lysine isopeptide (Lys-Gly) (interchain with G-Cter in SUMO2)" evidence="1">
    <location>
        <position position="585"/>
    </location>
</feature>
<feature type="cross-link" description="Glycyl lysine isopeptide (Lys-Gly) (interchain with G-Cter in SUMO2)" evidence="1">
    <location>
        <position position="602"/>
    </location>
</feature>
<feature type="cross-link" description="Glycyl lysine isopeptide (Lys-Gly) (interchain with G-Cter in SUMO2); alternate" evidence="1">
    <location>
        <position position="611"/>
    </location>
</feature>
<feature type="cross-link" description="Glycyl lysine isopeptide (Lys-Gly) (interchain with G-Cter in SUMO2)" evidence="1">
    <location>
        <position position="640"/>
    </location>
</feature>
<feature type="cross-link" description="Glycyl lysine isopeptide (Lys-Gly) (interchain with G-Cter in SUMO2)" evidence="1">
    <location>
        <position position="646"/>
    </location>
</feature>
<feature type="cross-link" description="Glycyl lysine isopeptide (Lys-Gly) (interchain with G-Cter in SUMO2); alternate" evidence="1">
    <location>
        <position position="789"/>
    </location>
</feature>
<feature type="splice variant" id="VSP_059004" description="In isoform 2.">
    <original>QFWGQKPWSQHYHQGYY</original>
    <variation>SVHVNVLCEE</variation>
    <location>
        <begin position="784"/>
        <end position="800"/>
    </location>
</feature>
<organism>
    <name type="scientific">Mus musculus</name>
    <name type="common">Mouse</name>
    <dbReference type="NCBI Taxonomy" id="10090"/>
    <lineage>
        <taxon>Eukaryota</taxon>
        <taxon>Metazoa</taxon>
        <taxon>Chordata</taxon>
        <taxon>Craniata</taxon>
        <taxon>Vertebrata</taxon>
        <taxon>Euteleostomi</taxon>
        <taxon>Mammalia</taxon>
        <taxon>Eutheria</taxon>
        <taxon>Euarchontoglires</taxon>
        <taxon>Glires</taxon>
        <taxon>Rodentia</taxon>
        <taxon>Myomorpha</taxon>
        <taxon>Muroidea</taxon>
        <taxon>Muridae</taxon>
        <taxon>Murinae</taxon>
        <taxon>Mus</taxon>
        <taxon>Mus</taxon>
    </lineage>
</organism>
<evidence type="ECO:0000250" key="1">
    <source>
        <dbReference type="UniProtKB" id="Q00839"/>
    </source>
</evidence>
<evidence type="ECO:0000250" key="2">
    <source>
        <dbReference type="UniProtKB" id="Q6IMY8"/>
    </source>
</evidence>
<evidence type="ECO:0000255" key="3"/>
<evidence type="ECO:0000255" key="4">
    <source>
        <dbReference type="PROSITE-ProRule" id="PRU00186"/>
    </source>
</evidence>
<evidence type="ECO:0000255" key="5">
    <source>
        <dbReference type="PROSITE-ProRule" id="PRU00548"/>
    </source>
</evidence>
<evidence type="ECO:0000256" key="6">
    <source>
        <dbReference type="SAM" id="MobiDB-lite"/>
    </source>
</evidence>
<evidence type="ECO:0000269" key="7">
    <source>
    </source>
</evidence>
<evidence type="ECO:0000269" key="8">
    <source>
    </source>
</evidence>
<evidence type="ECO:0000269" key="9">
    <source>
    </source>
</evidence>
<evidence type="ECO:0000269" key="10">
    <source>
    </source>
</evidence>
<evidence type="ECO:0000269" key="11">
    <source>
    </source>
</evidence>
<evidence type="ECO:0000269" key="12">
    <source>
    </source>
</evidence>
<evidence type="ECO:0000269" key="13">
    <source>
    </source>
</evidence>
<evidence type="ECO:0000269" key="14">
    <source>
    </source>
</evidence>
<evidence type="ECO:0000269" key="15">
    <source>
    </source>
</evidence>
<evidence type="ECO:0000303" key="16">
    <source>
    </source>
</evidence>
<evidence type="ECO:0000303" key="17">
    <source ref="5"/>
</evidence>
<evidence type="ECO:0000312" key="18">
    <source>
        <dbReference type="MGI" id="MGI:1858195"/>
    </source>
</evidence>
<evidence type="ECO:0007744" key="19">
    <source>
    </source>
</evidence>
<evidence type="ECO:0007744" key="20">
    <source>
    </source>
</evidence>
<evidence type="ECO:0007744" key="21">
    <source>
    </source>
</evidence>
<evidence type="ECO:0007744" key="22">
    <source>
    </source>
</evidence>
<evidence type="ECO:0007744" key="23">
    <source>
    </source>
</evidence>
<evidence type="ECO:0007744" key="24">
    <source>
    </source>
</evidence>
<reference key="1">
    <citation type="journal article" date="2005" name="Science">
        <title>The transcriptional landscape of the mammalian genome.</title>
        <authorList>
            <person name="Carninci P."/>
            <person name="Kasukawa T."/>
            <person name="Katayama S."/>
            <person name="Gough J."/>
            <person name="Frith M.C."/>
            <person name="Maeda N."/>
            <person name="Oyama R."/>
            <person name="Ravasi T."/>
            <person name="Lenhard B."/>
            <person name="Wells C."/>
            <person name="Kodzius R."/>
            <person name="Shimokawa K."/>
            <person name="Bajic V.B."/>
            <person name="Brenner S.E."/>
            <person name="Batalov S."/>
            <person name="Forrest A.R."/>
            <person name="Zavolan M."/>
            <person name="Davis M.J."/>
            <person name="Wilming L.G."/>
            <person name="Aidinis V."/>
            <person name="Allen J.E."/>
            <person name="Ambesi-Impiombato A."/>
            <person name="Apweiler R."/>
            <person name="Aturaliya R.N."/>
            <person name="Bailey T.L."/>
            <person name="Bansal M."/>
            <person name="Baxter L."/>
            <person name="Beisel K.W."/>
            <person name="Bersano T."/>
            <person name="Bono H."/>
            <person name="Chalk A.M."/>
            <person name="Chiu K.P."/>
            <person name="Choudhary V."/>
            <person name="Christoffels A."/>
            <person name="Clutterbuck D.R."/>
            <person name="Crowe M.L."/>
            <person name="Dalla E."/>
            <person name="Dalrymple B.P."/>
            <person name="de Bono B."/>
            <person name="Della Gatta G."/>
            <person name="di Bernardo D."/>
            <person name="Down T."/>
            <person name="Engstrom P."/>
            <person name="Fagiolini M."/>
            <person name="Faulkner G."/>
            <person name="Fletcher C.F."/>
            <person name="Fukushima T."/>
            <person name="Furuno M."/>
            <person name="Futaki S."/>
            <person name="Gariboldi M."/>
            <person name="Georgii-Hemming P."/>
            <person name="Gingeras T.R."/>
            <person name="Gojobori T."/>
            <person name="Green R.E."/>
            <person name="Gustincich S."/>
            <person name="Harbers M."/>
            <person name="Hayashi Y."/>
            <person name="Hensch T.K."/>
            <person name="Hirokawa N."/>
            <person name="Hill D."/>
            <person name="Huminiecki L."/>
            <person name="Iacono M."/>
            <person name="Ikeo K."/>
            <person name="Iwama A."/>
            <person name="Ishikawa T."/>
            <person name="Jakt M."/>
            <person name="Kanapin A."/>
            <person name="Katoh M."/>
            <person name="Kawasawa Y."/>
            <person name="Kelso J."/>
            <person name="Kitamura H."/>
            <person name="Kitano H."/>
            <person name="Kollias G."/>
            <person name="Krishnan S.P."/>
            <person name="Kruger A."/>
            <person name="Kummerfeld S.K."/>
            <person name="Kurochkin I.V."/>
            <person name="Lareau L.F."/>
            <person name="Lazarevic D."/>
            <person name="Lipovich L."/>
            <person name="Liu J."/>
            <person name="Liuni S."/>
            <person name="McWilliam S."/>
            <person name="Madan Babu M."/>
            <person name="Madera M."/>
            <person name="Marchionni L."/>
            <person name="Matsuda H."/>
            <person name="Matsuzawa S."/>
            <person name="Miki H."/>
            <person name="Mignone F."/>
            <person name="Miyake S."/>
            <person name="Morris K."/>
            <person name="Mottagui-Tabar S."/>
            <person name="Mulder N."/>
            <person name="Nakano N."/>
            <person name="Nakauchi H."/>
            <person name="Ng P."/>
            <person name="Nilsson R."/>
            <person name="Nishiguchi S."/>
            <person name="Nishikawa S."/>
            <person name="Nori F."/>
            <person name="Ohara O."/>
            <person name="Okazaki Y."/>
            <person name="Orlando V."/>
            <person name="Pang K.C."/>
            <person name="Pavan W.J."/>
            <person name="Pavesi G."/>
            <person name="Pesole G."/>
            <person name="Petrovsky N."/>
            <person name="Piazza S."/>
            <person name="Reed J."/>
            <person name="Reid J.F."/>
            <person name="Ring B.Z."/>
            <person name="Ringwald M."/>
            <person name="Rost B."/>
            <person name="Ruan Y."/>
            <person name="Salzberg S.L."/>
            <person name="Sandelin A."/>
            <person name="Schneider C."/>
            <person name="Schoenbach C."/>
            <person name="Sekiguchi K."/>
            <person name="Semple C.A."/>
            <person name="Seno S."/>
            <person name="Sessa L."/>
            <person name="Sheng Y."/>
            <person name="Shibata Y."/>
            <person name="Shimada H."/>
            <person name="Shimada K."/>
            <person name="Silva D."/>
            <person name="Sinclair B."/>
            <person name="Sperling S."/>
            <person name="Stupka E."/>
            <person name="Sugiura K."/>
            <person name="Sultana R."/>
            <person name="Takenaka Y."/>
            <person name="Taki K."/>
            <person name="Tammoja K."/>
            <person name="Tan S.L."/>
            <person name="Tang S."/>
            <person name="Taylor M.S."/>
            <person name="Tegner J."/>
            <person name="Teichmann S.A."/>
            <person name="Ueda H.R."/>
            <person name="van Nimwegen E."/>
            <person name="Verardo R."/>
            <person name="Wei C.L."/>
            <person name="Yagi K."/>
            <person name="Yamanishi H."/>
            <person name="Zabarovsky E."/>
            <person name="Zhu S."/>
            <person name="Zimmer A."/>
            <person name="Hide W."/>
            <person name="Bult C."/>
            <person name="Grimmond S.M."/>
            <person name="Teasdale R.D."/>
            <person name="Liu E.T."/>
            <person name="Brusic V."/>
            <person name="Quackenbush J."/>
            <person name="Wahlestedt C."/>
            <person name="Mattick J.S."/>
            <person name="Hume D.A."/>
            <person name="Kai C."/>
            <person name="Sasaki D."/>
            <person name="Tomaru Y."/>
            <person name="Fukuda S."/>
            <person name="Kanamori-Katayama M."/>
            <person name="Suzuki M."/>
            <person name="Aoki J."/>
            <person name="Arakawa T."/>
            <person name="Iida J."/>
            <person name="Imamura K."/>
            <person name="Itoh M."/>
            <person name="Kato T."/>
            <person name="Kawaji H."/>
            <person name="Kawagashira N."/>
            <person name="Kawashima T."/>
            <person name="Kojima M."/>
            <person name="Kondo S."/>
            <person name="Konno H."/>
            <person name="Nakano K."/>
            <person name="Ninomiya N."/>
            <person name="Nishio T."/>
            <person name="Okada M."/>
            <person name="Plessy C."/>
            <person name="Shibata K."/>
            <person name="Shiraki T."/>
            <person name="Suzuki S."/>
            <person name="Tagami M."/>
            <person name="Waki K."/>
            <person name="Watahiki A."/>
            <person name="Okamura-Oho Y."/>
            <person name="Suzuki H."/>
            <person name="Kawai J."/>
            <person name="Hayashizaki Y."/>
        </authorList>
    </citation>
    <scope>NUCLEOTIDE SEQUENCE [LARGE SCALE MRNA]</scope>
    <source>
        <tissue>Lung</tissue>
    </source>
</reference>
<reference key="2">
    <citation type="journal article" date="2009" name="PLoS Biol.">
        <title>Lineage-specific biology revealed by a finished genome assembly of the mouse.</title>
        <authorList>
            <person name="Church D.M."/>
            <person name="Goodstadt L."/>
            <person name="Hillier L.W."/>
            <person name="Zody M.C."/>
            <person name="Goldstein S."/>
            <person name="She X."/>
            <person name="Bult C.J."/>
            <person name="Agarwala R."/>
            <person name="Cherry J.L."/>
            <person name="DiCuccio M."/>
            <person name="Hlavina W."/>
            <person name="Kapustin Y."/>
            <person name="Meric P."/>
            <person name="Maglott D."/>
            <person name="Birtle Z."/>
            <person name="Marques A.C."/>
            <person name="Graves T."/>
            <person name="Zhou S."/>
            <person name="Teague B."/>
            <person name="Potamousis K."/>
            <person name="Churas C."/>
            <person name="Place M."/>
            <person name="Herschleb J."/>
            <person name="Runnheim R."/>
            <person name="Forrest D."/>
            <person name="Amos-Landgraf J."/>
            <person name="Schwartz D.C."/>
            <person name="Cheng Z."/>
            <person name="Lindblad-Toh K."/>
            <person name="Eichler E.E."/>
            <person name="Ponting C.P."/>
        </authorList>
    </citation>
    <scope>NUCLEOTIDE SEQUENCE [LARGE SCALE GENOMIC DNA]</scope>
    <source>
        <strain>C57BL/6J</strain>
    </source>
</reference>
<reference key="3">
    <citation type="submission" date="2005-09" db="EMBL/GenBank/DDBJ databases">
        <authorList>
            <person name="Mural R.J."/>
            <person name="Adams M.D."/>
            <person name="Myers E.W."/>
            <person name="Smith H.O."/>
            <person name="Venter J.C."/>
        </authorList>
    </citation>
    <scope>NUCLEOTIDE SEQUENCE [LARGE SCALE GENOMIC DNA]</scope>
</reference>
<reference key="4">
    <citation type="journal article" date="2004" name="Genome Res.">
        <title>The status, quality, and expansion of the NIH full-length cDNA project: the Mammalian Gene Collection (MGC).</title>
        <authorList>
            <consortium name="The MGC Project Team"/>
        </authorList>
    </citation>
    <scope>NUCLEOTIDE SEQUENCE [LARGE SCALE MRNA]</scope>
    <source>
        <strain>FVB/N</strain>
        <tissue>Mammary tumor</tissue>
    </source>
</reference>
<reference key="5">
    <citation type="submission" date="1998-06" db="EMBL/GenBank/DDBJ databases">
        <title>hnRNP U is required for early embryonic development.</title>
        <authorList>
            <person name="Roshon M.J."/>
            <person name="DeGregori J."/>
            <person name="Ruley H.E."/>
        </authorList>
    </citation>
    <scope>NUCLEOTIDE SEQUENCE [GENOMIC DNA] OF 208-268</scope>
</reference>
<reference key="6">
    <citation type="journal article" date="2005" name="Transgenic Res.">
        <title>Hypomorphic mutation in hnRNP U results in post-implantation lethality.</title>
        <authorList>
            <person name="Roshon M.J."/>
            <person name="Ruley H.E."/>
        </authorList>
    </citation>
    <scope>FUNCTION</scope>
    <scope>DISRUPTION PHENOTYPE</scope>
</reference>
<reference key="7">
    <citation type="journal article" date="2006" name="Mol. Cell. Proteomics">
        <title>Comprehensive identification of phosphorylation sites in postsynaptic density preparations.</title>
        <authorList>
            <person name="Trinidad J.C."/>
            <person name="Specht C.G."/>
            <person name="Thalhammer A."/>
            <person name="Schoepfer R."/>
            <person name="Burlingame A.L."/>
        </authorList>
    </citation>
    <scope>IDENTIFICATION BY MASS SPECTROMETRY [LARGE SCALE ANALYSIS]</scope>
    <source>
        <tissue>Brain</tissue>
    </source>
</reference>
<reference key="8">
    <citation type="journal article" date="2007" name="J. Immunol.">
        <title>Quantitative time-resolved phosphoproteomic analysis of mast cell signaling.</title>
        <authorList>
            <person name="Cao L."/>
            <person name="Yu K."/>
            <person name="Banh C."/>
            <person name="Nguyen V."/>
            <person name="Ritz A."/>
            <person name="Raphael B.J."/>
            <person name="Kawakami Y."/>
            <person name="Kawakami T."/>
            <person name="Salomon A.R."/>
        </authorList>
    </citation>
    <scope>PHOSPHORYLATION [LARGE SCALE ANALYSIS] AT TYR-242</scope>
    <scope>IDENTIFICATION BY MASS SPECTROMETRY [LARGE SCALE ANALYSIS]</scope>
    <source>
        <tissue>Mast cell</tissue>
    </source>
</reference>
<reference key="9">
    <citation type="journal article" date="2007" name="Proc. Natl. Acad. Sci. U.S.A.">
        <title>Large-scale phosphorylation analysis of mouse liver.</title>
        <authorList>
            <person name="Villen J."/>
            <person name="Beausoleil S.A."/>
            <person name="Gerber S.A."/>
            <person name="Gygi S.P."/>
        </authorList>
    </citation>
    <scope>PHOSPHORYLATION [LARGE SCALE ANALYSIS] AT SER-58 AND SER-247</scope>
    <scope>IDENTIFICATION BY MASS SPECTROMETRY [LARGE SCALE ANALYSIS]</scope>
    <source>
        <tissue>Liver</tissue>
    </source>
</reference>
<reference key="10">
    <citation type="journal article" date="2008" name="Mol. Cell. Biol.">
        <title>Rhythmic SAF-A binding underlies circadian transcription of the Bmal1 gene.</title>
        <authorList>
            <person name="Onishi Y."/>
            <person name="Hanai S."/>
            <person name="Ohno T."/>
            <person name="Hara Y."/>
            <person name="Ishida N."/>
        </authorList>
    </citation>
    <scope>FUNCTION</scope>
    <scope>SUBCELLULAR LOCATION</scope>
</reference>
<reference key="11">
    <citation type="journal article" date="2009" name="Immunity">
        <title>The phagosomal proteome in interferon-gamma-activated macrophages.</title>
        <authorList>
            <person name="Trost M."/>
            <person name="English L."/>
            <person name="Lemieux S."/>
            <person name="Courcelles M."/>
            <person name="Desjardins M."/>
            <person name="Thibault P."/>
        </authorList>
    </citation>
    <scope>PHOSPHORYLATION [LARGE SCALE ANALYSIS] AT SER-58 AND SER-247</scope>
    <scope>IDENTIFICATION BY MASS SPECTROMETRY [LARGE SCALE ANALYSIS]</scope>
</reference>
<reference key="12">
    <citation type="journal article" date="2009" name="Nucleic Acids Res.">
        <title>Molecular characterization of Mybbp1a as a co-repressor on the Period2 promoter.</title>
        <authorList>
            <person name="Hara Y."/>
            <person name="Onishi Y."/>
            <person name="Oishi K."/>
            <person name="Miyazaki K."/>
            <person name="Fukamizu A."/>
            <person name="Ishida N."/>
        </authorList>
    </citation>
    <scope>INTERACTION WITH CRY1</scope>
</reference>
<reference key="13">
    <citation type="journal article" date="2010" name="Cell">
        <title>A tissue-specific atlas of mouse protein phosphorylation and expression.</title>
        <authorList>
            <person name="Huttlin E.L."/>
            <person name="Jedrychowski M.P."/>
            <person name="Elias J.E."/>
            <person name="Goswami T."/>
            <person name="Rad R."/>
            <person name="Beausoleil S.A."/>
            <person name="Villen J."/>
            <person name="Haas W."/>
            <person name="Sowa M.E."/>
            <person name="Gygi S.P."/>
        </authorList>
    </citation>
    <scope>PHOSPHORYLATION [LARGE SCALE ANALYSIS] AT SER-58 AND SER-247</scope>
    <scope>IDENTIFICATION BY MASS SPECTROMETRY [LARGE SCALE ANALYSIS]</scope>
    <source>
        <tissue>Brain</tissue>
        <tissue>Brown adipose tissue</tissue>
        <tissue>Heart</tissue>
        <tissue>Kidney</tissue>
        <tissue>Liver</tissue>
        <tissue>Lung</tissue>
        <tissue>Pancreas</tissue>
        <tissue>Spleen</tissue>
        <tissue>Testis</tissue>
    </source>
</reference>
<reference key="14">
    <citation type="journal article" date="2010" name="Dev. Cell">
        <title>The matrix protein hnRNP U is required for chromosomal localization of Xist RNA.</title>
        <authorList>
            <person name="Hasegawa Y."/>
            <person name="Brockdorff N."/>
            <person name="Kawano S."/>
            <person name="Tsutui K."/>
            <person name="Tsutui K."/>
            <person name="Nakagawa S."/>
        </authorList>
    </citation>
    <scope>FUNCTION</scope>
    <scope>SUBCELLULAR LOCATION</scope>
    <scope>XIST RNA-BINDING</scope>
    <scope>RNA-BINDING REGION</scope>
    <scope>SAP DOMAIN</scope>
</reference>
<reference key="15">
    <citation type="journal article" date="2011" name="Cell Reprogram.">
        <title>SAF-A has a role in transcriptional regulation of Oct4 in ES cells through promoter binding.</title>
        <authorList>
            <person name="Vizlin-Hodzic D."/>
            <person name="Johansson H."/>
            <person name="Ryme J."/>
            <person name="Simonsson T."/>
            <person name="Simonsson S."/>
        </authorList>
    </citation>
    <scope>FUNCTION IN TRANSCRIPTIONAL REGULATION</scope>
    <scope>ASSOCIATION WITH RNA POLYMERASE II HOLOENZYME</scope>
    <scope>DNA-BINDING</scope>
    <scope>PROMOTER CHROMATIN-BINDING</scope>
    <scope>IDENTIFICATION BY MASS SPECTROMETRY</scope>
</reference>
<reference key="16">
    <citation type="journal article" date="2011" name="PLoS ONE">
        <title>SAF-A forms a complex with BRG1 and both components are required for RNA polymerase II mediated transcription.</title>
        <authorList>
            <person name="Vizlin-Hodzic D."/>
            <person name="Runnberg R."/>
            <person name="Ryme J."/>
            <person name="Simonsson S."/>
            <person name="Simonsson T."/>
        </authorList>
    </citation>
    <scope>FUNCTION IN TRANSCRIPTIONAL REGULATION</scope>
    <scope>INTERACTION WITH SMARCA4</scope>
    <scope>SUBCELLULAR LOCATION</scope>
</reference>
<reference key="17">
    <citation type="journal article" date="2013" name="Mol. Cell">
        <title>SIRT5-mediated lysine desuccinylation impacts diverse metabolic pathways.</title>
        <authorList>
            <person name="Park J."/>
            <person name="Chen Y."/>
            <person name="Tishkoff D.X."/>
            <person name="Peng C."/>
            <person name="Tan M."/>
            <person name="Dai L."/>
            <person name="Xie Z."/>
            <person name="Zhang Y."/>
            <person name="Zwaans B.M."/>
            <person name="Skinner M.E."/>
            <person name="Lombard D.B."/>
            <person name="Zhao Y."/>
        </authorList>
    </citation>
    <scope>ACETYLATION [LARGE SCALE ANALYSIS] AT LYS-17; LYS-21; LYS-181; LYS-241 AND LYS-328</scope>
    <scope>IDENTIFICATION BY MASS SPECTROMETRY [LARGE SCALE ANALYSIS]</scope>
    <source>
        <tissue>Embryonic fibroblast</tissue>
    </source>
</reference>
<reference key="18">
    <citation type="journal article" date="2014" name="Mol. Cell. Proteomics">
        <title>Immunoaffinity enrichment and mass spectrometry analysis of protein methylation.</title>
        <authorList>
            <person name="Guo A."/>
            <person name="Gu H."/>
            <person name="Zhou J."/>
            <person name="Mulhern D."/>
            <person name="Wang Y."/>
            <person name="Lee K.A."/>
            <person name="Yang V."/>
            <person name="Aguiar M."/>
            <person name="Kornhauser J."/>
            <person name="Jia X."/>
            <person name="Ren J."/>
            <person name="Beausoleil S.A."/>
            <person name="Silva J.C."/>
            <person name="Vemulapalli V."/>
            <person name="Bedford M.T."/>
            <person name="Comb M.J."/>
        </authorList>
    </citation>
    <scope>METHYLATION [LARGE SCALE ANALYSIS] AT ARG-691; ARG-696; ARG-703; ARG-709; ARG-715 AND ARG-737</scope>
    <scope>IDENTIFICATION BY MASS SPECTROMETRY [LARGE SCALE ANALYSIS]</scope>
    <source>
        <tissue>Brain</tissue>
        <tissue>Embryo</tissue>
    </source>
</reference>
<reference key="19">
    <citation type="journal article" date="2014" name="Nature">
        <title>Citrullination regulates pluripotency and histone H1 binding to chromatin.</title>
        <authorList>
            <person name="Christophorou M.A."/>
            <person name="Castelo-Branco G."/>
            <person name="Halley-Stott R.P."/>
            <person name="Oliveira C.S."/>
            <person name="Loos R."/>
            <person name="Radzisheuskaya A."/>
            <person name="Mowen K.A."/>
            <person name="Bertone P."/>
            <person name="Silva J.C."/>
            <person name="Zernicka-Goetz M."/>
            <person name="Nielsen M.L."/>
            <person name="Gurdon J.B."/>
            <person name="Kouzarides T."/>
        </authorList>
    </citation>
    <scope>CITRULLINATION AT ARG-231</scope>
</reference>
<reference key="20">
    <citation type="journal article" date="2015" name="PLoS Genet.">
        <title>Xist exon 7 contributes to the stable localization of Xist RNA on the inactive X-chromosome.</title>
        <authorList>
            <person name="Yamada N."/>
            <person name="Hasegawa Y."/>
            <person name="Yue M."/>
            <person name="Hamada T."/>
            <person name="Nakagawa S."/>
            <person name="Ogawa Y."/>
        </authorList>
    </citation>
    <scope>FUNCTION</scope>
    <scope>XIST RNA-BINDING</scope>
</reference>
<reference key="21">
    <citation type="journal article" date="2017" name="Proc. Natl. Acad. Sci. U.S.A.">
        <title>Zbtb7b engages the long noncoding RNA Blnc1 to drive brown and beige fat development and thermogenesis.</title>
        <authorList>
            <person name="Li S."/>
            <person name="Mi L."/>
            <person name="Yu L."/>
            <person name="Yu Q."/>
            <person name="Liu T."/>
            <person name="Wang G.X."/>
            <person name="Zhao X.Y."/>
            <person name="Wu J."/>
            <person name="Lin J.D."/>
        </authorList>
    </citation>
    <scope>FUNCTION</scope>
    <scope>INTERACTION WITH ZBTB7B</scope>
    <scope>RNA-BINDING</scope>
</reference>
<dbReference type="EMBL" id="AK165844">
    <property type="protein sequence ID" value="BAE38409.1"/>
    <property type="molecule type" value="mRNA"/>
</dbReference>
<dbReference type="EMBL" id="AC166710">
    <property type="status" value="NOT_ANNOTATED_CDS"/>
    <property type="molecule type" value="Genomic_DNA"/>
</dbReference>
<dbReference type="EMBL" id="CH466555">
    <property type="protein sequence ID" value="EDL13176.1"/>
    <property type="molecule type" value="Genomic_DNA"/>
</dbReference>
<dbReference type="EMBL" id="CH466555">
    <property type="protein sequence ID" value="EDL13177.1"/>
    <property type="molecule type" value="Genomic_DNA"/>
</dbReference>
<dbReference type="EMBL" id="BC018353">
    <property type="protein sequence ID" value="AAH18353.1"/>
    <property type="molecule type" value="mRNA"/>
</dbReference>
<dbReference type="EMBL" id="AF073991">
    <property type="protein sequence ID" value="AAD29847.1"/>
    <property type="molecule type" value="Genomic_DNA"/>
</dbReference>
<dbReference type="CCDS" id="CCDS35804.1">
    <molecule id="Q8VEK3-1"/>
</dbReference>
<dbReference type="RefSeq" id="NP_058085.2">
    <molecule id="Q8VEK3-1"/>
    <property type="nucleotide sequence ID" value="NM_016805.3"/>
</dbReference>
<dbReference type="RefSeq" id="XP_017177161.1">
    <property type="nucleotide sequence ID" value="XM_017321672.1"/>
</dbReference>
<dbReference type="RefSeq" id="XP_017177162.1">
    <property type="nucleotide sequence ID" value="XM_017321673.1"/>
</dbReference>
<dbReference type="RefSeq" id="XP_017177163.1">
    <property type="nucleotide sequence ID" value="XM_017321674.1"/>
</dbReference>
<dbReference type="RefSeq" id="XP_036008205.1">
    <molecule id="Q8VEK3-1"/>
    <property type="nucleotide sequence ID" value="XM_036152312.1"/>
</dbReference>
<dbReference type="RefSeq" id="XP_036008206.1">
    <molecule id="Q8VEK3-2"/>
    <property type="nucleotide sequence ID" value="XM_036152313.1"/>
</dbReference>
<dbReference type="RefSeq" id="XP_036008208.1">
    <molecule id="Q8VEK3-2"/>
    <property type="nucleotide sequence ID" value="XM_036152315.1"/>
</dbReference>
<dbReference type="RefSeq" id="XP_036008210.1">
    <molecule id="Q8VEK3-2"/>
    <property type="nucleotide sequence ID" value="XM_036152317.1"/>
</dbReference>
<dbReference type="SMR" id="Q8VEK3"/>
<dbReference type="BioGRID" id="206185">
    <property type="interactions" value="142"/>
</dbReference>
<dbReference type="ComplexPortal" id="CPX-1089">
    <property type="entry name" value="CRD-mediated mRNA stability complex"/>
</dbReference>
<dbReference type="DIP" id="DIP-34257N"/>
<dbReference type="FunCoup" id="Q8VEK3">
    <property type="interactions" value="3920"/>
</dbReference>
<dbReference type="IntAct" id="Q8VEK3">
    <property type="interactions" value="11"/>
</dbReference>
<dbReference type="MINT" id="Q8VEK3"/>
<dbReference type="STRING" id="10090.ENSMUSP00000047571"/>
<dbReference type="GlyGen" id="Q8VEK3">
    <property type="glycosylation" value="5 sites, 1 N-linked glycan (1 site), 1 O-linked glycan (4 sites)"/>
</dbReference>
<dbReference type="iPTMnet" id="Q8VEK3"/>
<dbReference type="MetOSite" id="Q8VEK3"/>
<dbReference type="PhosphoSitePlus" id="Q8VEK3"/>
<dbReference type="SwissPalm" id="Q8VEK3"/>
<dbReference type="jPOST" id="Q8VEK3"/>
<dbReference type="PaxDb" id="10090-ENSMUSP00000047571"/>
<dbReference type="PeptideAtlas" id="Q8VEK3"/>
<dbReference type="ProteomicsDB" id="267057">
    <molecule id="Q8VEK3-1"/>
</dbReference>
<dbReference type="ProteomicsDB" id="267058">
    <molecule id="Q8VEK3-2"/>
</dbReference>
<dbReference type="Pumba" id="Q8VEK3"/>
<dbReference type="Antibodypedia" id="3158">
    <property type="antibodies" value="279 antibodies from 33 providers"/>
</dbReference>
<dbReference type="DNASU" id="51810"/>
<dbReference type="Ensembl" id="ENSMUST00000037748.9">
    <molecule id="Q8VEK3-1"/>
    <property type="protein sequence ID" value="ENSMUSP00000047571.8"/>
    <property type="gene ID" value="ENSMUSG00000039630.11"/>
</dbReference>
<dbReference type="Ensembl" id="ENSMUST00000161769.8">
    <molecule id="Q8VEK3-2"/>
    <property type="protein sequence ID" value="ENSMUSP00000124147.2"/>
    <property type="gene ID" value="ENSMUSG00000039630.11"/>
</dbReference>
<dbReference type="GeneID" id="51810"/>
<dbReference type="KEGG" id="mmu:51810"/>
<dbReference type="UCSC" id="uc011wxl.1">
    <molecule id="Q8VEK3-1"/>
    <property type="organism name" value="mouse"/>
</dbReference>
<dbReference type="AGR" id="MGI:1858195"/>
<dbReference type="CTD" id="3192"/>
<dbReference type="MGI" id="MGI:1858195">
    <property type="gene designation" value="Hnrnpu"/>
</dbReference>
<dbReference type="VEuPathDB" id="HostDB:ENSMUSG00000039630"/>
<dbReference type="eggNOG" id="KOG2242">
    <property type="taxonomic scope" value="Eukaryota"/>
</dbReference>
<dbReference type="GeneTree" id="ENSGT00940000156546"/>
<dbReference type="HOGENOM" id="CLU_012140_1_0_1"/>
<dbReference type="InParanoid" id="Q8VEK3"/>
<dbReference type="OMA" id="CNCEMED"/>
<dbReference type="OrthoDB" id="445357at2759"/>
<dbReference type="PhylomeDB" id="Q8VEK3"/>
<dbReference type="TreeFam" id="TF317301"/>
<dbReference type="Reactome" id="R-MMU-72163">
    <property type="pathway name" value="mRNA Splicing - Major Pathway"/>
</dbReference>
<dbReference type="Reactome" id="R-MMU-72203">
    <property type="pathway name" value="Processing of Capped Intron-Containing Pre-mRNA"/>
</dbReference>
<dbReference type="BioGRID-ORCS" id="51810">
    <property type="hits" value="30 hits in 80 CRISPR screens"/>
</dbReference>
<dbReference type="CD-CODE" id="764D0258">
    <property type="entry name" value="Neuronal RNP granule"/>
</dbReference>
<dbReference type="CD-CODE" id="DE1E139C">
    <property type="entry name" value="Chromatoid body"/>
</dbReference>
<dbReference type="ChiTaRS" id="Hnrnpu">
    <property type="organism name" value="mouse"/>
</dbReference>
<dbReference type="PRO" id="PR:Q8VEK3"/>
<dbReference type="Proteomes" id="UP000000589">
    <property type="component" value="Chromosome 1"/>
</dbReference>
<dbReference type="RNAct" id="Q8VEK3">
    <property type="molecule type" value="protein"/>
</dbReference>
<dbReference type="Bgee" id="ENSMUSG00000039630">
    <property type="expression patterns" value="Expressed in embryonic post-anal tail and 75 other cell types or tissues"/>
</dbReference>
<dbReference type="ExpressionAtlas" id="Q8VEK3">
    <property type="expression patterns" value="baseline and differential"/>
</dbReference>
<dbReference type="GO" id="GO:0071013">
    <property type="term" value="C:catalytic step 2 spliceosome"/>
    <property type="evidence" value="ECO:0007669"/>
    <property type="project" value="Ensembl"/>
</dbReference>
<dbReference type="GO" id="GO:0009986">
    <property type="term" value="C:cell surface"/>
    <property type="evidence" value="ECO:0000250"/>
    <property type="project" value="UniProtKB"/>
</dbReference>
<dbReference type="GO" id="GO:0005813">
    <property type="term" value="C:centrosome"/>
    <property type="evidence" value="ECO:0000250"/>
    <property type="project" value="UniProtKB"/>
</dbReference>
<dbReference type="GO" id="GO:0070937">
    <property type="term" value="C:CRD-mediated mRNA stability complex"/>
    <property type="evidence" value="ECO:0000266"/>
    <property type="project" value="ComplexPortal"/>
</dbReference>
<dbReference type="GO" id="GO:0036464">
    <property type="term" value="C:cytoplasmic ribonucleoprotein granule"/>
    <property type="evidence" value="ECO:0007669"/>
    <property type="project" value="Ensembl"/>
</dbReference>
<dbReference type="GO" id="GO:0005829">
    <property type="term" value="C:cytosol"/>
    <property type="evidence" value="ECO:0000266"/>
    <property type="project" value="ComplexPortal"/>
</dbReference>
<dbReference type="GO" id="GO:0030425">
    <property type="term" value="C:dendrite"/>
    <property type="evidence" value="ECO:0007669"/>
    <property type="project" value="GOC"/>
</dbReference>
<dbReference type="GO" id="GO:0098577">
    <property type="term" value="C:inactive sex chromosome"/>
    <property type="evidence" value="ECO:0000314"/>
    <property type="project" value="UniProtKB"/>
</dbReference>
<dbReference type="GO" id="GO:0000776">
    <property type="term" value="C:kinetochore"/>
    <property type="evidence" value="ECO:0000250"/>
    <property type="project" value="UniProtKB"/>
</dbReference>
<dbReference type="GO" id="GO:0030496">
    <property type="term" value="C:midbody"/>
    <property type="evidence" value="ECO:0000250"/>
    <property type="project" value="UniProtKB"/>
</dbReference>
<dbReference type="GO" id="GO:0072686">
    <property type="term" value="C:mitotic spindle"/>
    <property type="evidence" value="ECO:0000250"/>
    <property type="project" value="UniProtKB"/>
</dbReference>
<dbReference type="GO" id="GO:1990498">
    <property type="term" value="C:mitotic spindle microtubule"/>
    <property type="evidence" value="ECO:0000250"/>
    <property type="project" value="UniProtKB"/>
</dbReference>
<dbReference type="GO" id="GO:1990023">
    <property type="term" value="C:mitotic spindle midzone"/>
    <property type="evidence" value="ECO:0000250"/>
    <property type="project" value="UniProtKB"/>
</dbReference>
<dbReference type="GO" id="GO:0000228">
    <property type="term" value="C:nuclear chromosome"/>
    <property type="evidence" value="ECO:0000250"/>
    <property type="project" value="UniProtKB"/>
</dbReference>
<dbReference type="GO" id="GO:0016363">
    <property type="term" value="C:nuclear matrix"/>
    <property type="evidence" value="ECO:0000250"/>
    <property type="project" value="UniProtKB"/>
</dbReference>
<dbReference type="GO" id="GO:0016607">
    <property type="term" value="C:nuclear speck"/>
    <property type="evidence" value="ECO:0000250"/>
    <property type="project" value="UniProtKB"/>
</dbReference>
<dbReference type="GO" id="GO:0005654">
    <property type="term" value="C:nucleoplasm"/>
    <property type="evidence" value="ECO:0000304"/>
    <property type="project" value="Reactome"/>
</dbReference>
<dbReference type="GO" id="GO:0005634">
    <property type="term" value="C:nucleus"/>
    <property type="evidence" value="ECO:0000314"/>
    <property type="project" value="UniProtKB"/>
</dbReference>
<dbReference type="GO" id="GO:0032991">
    <property type="term" value="C:protein-containing complex"/>
    <property type="evidence" value="ECO:0000250"/>
    <property type="project" value="UniProtKB"/>
</dbReference>
<dbReference type="GO" id="GO:1990904">
    <property type="term" value="C:ribonucleoprotein complex"/>
    <property type="evidence" value="ECO:0000314"/>
    <property type="project" value="MGI"/>
</dbReference>
<dbReference type="GO" id="GO:0090575">
    <property type="term" value="C:RNA polymerase II transcription regulator complex"/>
    <property type="evidence" value="ECO:0007669"/>
    <property type="project" value="Ensembl"/>
</dbReference>
<dbReference type="GO" id="GO:0000922">
    <property type="term" value="C:spindle pole"/>
    <property type="evidence" value="ECO:0007669"/>
    <property type="project" value="UniProtKB-SubCell"/>
</dbReference>
<dbReference type="GO" id="GO:0005697">
    <property type="term" value="C:telomerase holoenzyme complex"/>
    <property type="evidence" value="ECO:0007669"/>
    <property type="project" value="Ensembl"/>
</dbReference>
<dbReference type="GO" id="GO:0003779">
    <property type="term" value="F:actin binding"/>
    <property type="evidence" value="ECO:0000250"/>
    <property type="project" value="UniProtKB"/>
</dbReference>
<dbReference type="GO" id="GO:0005524">
    <property type="term" value="F:ATP binding"/>
    <property type="evidence" value="ECO:0000250"/>
    <property type="project" value="UniProtKB"/>
</dbReference>
<dbReference type="GO" id="GO:0003682">
    <property type="term" value="F:chromatin binding"/>
    <property type="evidence" value="ECO:0000250"/>
    <property type="project" value="UniProtKB"/>
</dbReference>
<dbReference type="GO" id="GO:0031490">
    <property type="term" value="F:chromatin DNA binding"/>
    <property type="evidence" value="ECO:0000250"/>
    <property type="project" value="UniProtKB"/>
</dbReference>
<dbReference type="GO" id="GO:0003690">
    <property type="term" value="F:double-stranded DNA binding"/>
    <property type="evidence" value="ECO:0000250"/>
    <property type="project" value="UniProtKB"/>
</dbReference>
<dbReference type="GO" id="GO:0003725">
    <property type="term" value="F:double-stranded RNA binding"/>
    <property type="evidence" value="ECO:0000250"/>
    <property type="project" value="UniProtKB"/>
</dbReference>
<dbReference type="GO" id="GO:0042802">
    <property type="term" value="F:identical protein binding"/>
    <property type="evidence" value="ECO:0000250"/>
    <property type="project" value="UniProtKB"/>
</dbReference>
<dbReference type="GO" id="GO:0106222">
    <property type="term" value="F:lncRNA binding"/>
    <property type="evidence" value="ECO:0000314"/>
    <property type="project" value="MGI"/>
</dbReference>
<dbReference type="GO" id="GO:0003730">
    <property type="term" value="F:mRNA 3'-UTR binding"/>
    <property type="evidence" value="ECO:0000250"/>
    <property type="project" value="UniProtKB"/>
</dbReference>
<dbReference type="GO" id="GO:0034584">
    <property type="term" value="F:piRNA binding"/>
    <property type="evidence" value="ECO:0007669"/>
    <property type="project" value="Ensembl"/>
</dbReference>
<dbReference type="GO" id="GO:0008143">
    <property type="term" value="F:poly(A) binding"/>
    <property type="evidence" value="ECO:0000250"/>
    <property type="project" value="UniProtKB"/>
</dbReference>
<dbReference type="GO" id="GO:0017130">
    <property type="term" value="F:poly(C) RNA binding"/>
    <property type="evidence" value="ECO:0000250"/>
    <property type="project" value="UniProtKB"/>
</dbReference>
<dbReference type="GO" id="GO:0034046">
    <property type="term" value="F:poly(G) binding"/>
    <property type="evidence" value="ECO:0000250"/>
    <property type="project" value="UniProtKB"/>
</dbReference>
<dbReference type="GO" id="GO:0036002">
    <property type="term" value="F:pre-mRNA binding"/>
    <property type="evidence" value="ECO:0000250"/>
    <property type="project" value="UniProtKB"/>
</dbReference>
<dbReference type="GO" id="GO:1990841">
    <property type="term" value="F:promoter-specific chromatin binding"/>
    <property type="evidence" value="ECO:0000314"/>
    <property type="project" value="UniProtKB"/>
</dbReference>
<dbReference type="GO" id="GO:0044877">
    <property type="term" value="F:protein-containing complex binding"/>
    <property type="evidence" value="ECO:0000250"/>
    <property type="project" value="UniProtKB"/>
</dbReference>
<dbReference type="GO" id="GO:0043021">
    <property type="term" value="F:ribonucleoprotein complex binding"/>
    <property type="evidence" value="ECO:0007669"/>
    <property type="project" value="Ensembl"/>
</dbReference>
<dbReference type="GO" id="GO:0003723">
    <property type="term" value="F:RNA binding"/>
    <property type="evidence" value="ECO:0000314"/>
    <property type="project" value="UniProtKB"/>
</dbReference>
<dbReference type="GO" id="GO:0099122">
    <property type="term" value="F:RNA polymerase II C-terminal domain binding"/>
    <property type="evidence" value="ECO:0000314"/>
    <property type="project" value="UniProtKB"/>
</dbReference>
<dbReference type="GO" id="GO:0000978">
    <property type="term" value="F:RNA polymerase II cis-regulatory region sequence-specific DNA binding"/>
    <property type="evidence" value="ECO:0000314"/>
    <property type="project" value="UniProtKB"/>
</dbReference>
<dbReference type="GO" id="GO:0000993">
    <property type="term" value="F:RNA polymerase II complex binding"/>
    <property type="evidence" value="ECO:0000250"/>
    <property type="project" value="UniProtKB"/>
</dbReference>
<dbReference type="GO" id="GO:0043565">
    <property type="term" value="F:sequence-specific DNA binding"/>
    <property type="evidence" value="ECO:0000314"/>
    <property type="project" value="UniProtKB"/>
</dbReference>
<dbReference type="GO" id="GO:1990837">
    <property type="term" value="F:sequence-specific double-stranded DNA binding"/>
    <property type="evidence" value="ECO:0000250"/>
    <property type="project" value="UniProtKB"/>
</dbReference>
<dbReference type="GO" id="GO:0003697">
    <property type="term" value="F:single-stranded DNA binding"/>
    <property type="evidence" value="ECO:0000250"/>
    <property type="project" value="UniProtKB"/>
</dbReference>
<dbReference type="GO" id="GO:0003727">
    <property type="term" value="F:single-stranded RNA binding"/>
    <property type="evidence" value="ECO:0000250"/>
    <property type="project" value="UniProtKB"/>
</dbReference>
<dbReference type="GO" id="GO:0017069">
    <property type="term" value="F:snRNA binding"/>
    <property type="evidence" value="ECO:0000250"/>
    <property type="project" value="UniProtKB"/>
</dbReference>
<dbReference type="GO" id="GO:0070034">
    <property type="term" value="F:telomerase RNA binding"/>
    <property type="evidence" value="ECO:0007669"/>
    <property type="project" value="Ensembl"/>
</dbReference>
<dbReference type="GO" id="GO:0001097">
    <property type="term" value="F:TFIIH-class transcription factor complex binding"/>
    <property type="evidence" value="ECO:0000250"/>
    <property type="project" value="UniProtKB"/>
</dbReference>
<dbReference type="GO" id="GO:0003714">
    <property type="term" value="F:transcription corepressor activity"/>
    <property type="evidence" value="ECO:0000250"/>
    <property type="project" value="UniProtKB"/>
</dbReference>
<dbReference type="GO" id="GO:1990845">
    <property type="term" value="P:adaptive thermogenesis"/>
    <property type="evidence" value="ECO:0000315"/>
    <property type="project" value="UniProtKB"/>
</dbReference>
<dbReference type="GO" id="GO:0055013">
    <property type="term" value="P:cardiac muscle cell development"/>
    <property type="evidence" value="ECO:0000315"/>
    <property type="project" value="MGI"/>
</dbReference>
<dbReference type="GO" id="GO:0051301">
    <property type="term" value="P:cell division"/>
    <property type="evidence" value="ECO:0007669"/>
    <property type="project" value="UniProtKB-KW"/>
</dbReference>
<dbReference type="GO" id="GO:0071385">
    <property type="term" value="P:cellular response to glucocorticoid stimulus"/>
    <property type="evidence" value="ECO:0000250"/>
    <property type="project" value="UniProtKB"/>
</dbReference>
<dbReference type="GO" id="GO:1990830">
    <property type="term" value="P:cellular response to leukemia inhibitory factor"/>
    <property type="evidence" value="ECO:0000314"/>
    <property type="project" value="UniProtKB"/>
</dbReference>
<dbReference type="GO" id="GO:0032922">
    <property type="term" value="P:circadian regulation of gene expression"/>
    <property type="evidence" value="ECO:0000314"/>
    <property type="project" value="UniProtKB"/>
</dbReference>
<dbReference type="GO" id="GO:0070934">
    <property type="term" value="P:CRD-mediated mRNA stabilization"/>
    <property type="evidence" value="ECO:0000266"/>
    <property type="project" value="ComplexPortal"/>
</dbReference>
<dbReference type="GO" id="GO:0098963">
    <property type="term" value="P:dendritic transport of messenger ribonucleoprotein complex"/>
    <property type="evidence" value="ECO:0000314"/>
    <property type="project" value="SynGO"/>
</dbReference>
<dbReference type="GO" id="GO:0009048">
    <property type="term" value="P:dosage compensation by inactivation of X chromosome"/>
    <property type="evidence" value="ECO:0000315"/>
    <property type="project" value="UniProtKB"/>
</dbReference>
<dbReference type="GO" id="GO:0030218">
    <property type="term" value="P:erythrocyte differentiation"/>
    <property type="evidence" value="ECO:0000315"/>
    <property type="project" value="MGI"/>
</dbReference>
<dbReference type="GO" id="GO:0051457">
    <property type="term" value="P:maintenance of protein location in nucleus"/>
    <property type="evidence" value="ECO:0000250"/>
    <property type="project" value="UniProtKB"/>
</dbReference>
<dbReference type="GO" id="GO:0016071">
    <property type="term" value="P:mRNA metabolic process"/>
    <property type="evidence" value="ECO:0000315"/>
    <property type="project" value="MGI"/>
</dbReference>
<dbReference type="GO" id="GO:0006397">
    <property type="term" value="P:mRNA processing"/>
    <property type="evidence" value="ECO:0007669"/>
    <property type="project" value="UniProtKB-KW"/>
</dbReference>
<dbReference type="GO" id="GO:0048255">
    <property type="term" value="P:mRNA stabilization"/>
    <property type="evidence" value="ECO:0000250"/>
    <property type="project" value="UniProtKB"/>
</dbReference>
<dbReference type="GO" id="GO:0033673">
    <property type="term" value="P:negative regulation of kinase activity"/>
    <property type="evidence" value="ECO:0000250"/>
    <property type="project" value="UniProtKB"/>
</dbReference>
<dbReference type="GO" id="GO:1900152">
    <property type="term" value="P:negative regulation of nuclear-transcribed mRNA catabolic process, deadenylation-dependent decay"/>
    <property type="evidence" value="ECO:0000266"/>
    <property type="project" value="ComplexPortal"/>
</dbReference>
<dbReference type="GO" id="GO:2000737">
    <property type="term" value="P:negative regulation of stem cell differentiation"/>
    <property type="evidence" value="ECO:0000315"/>
    <property type="project" value="UniProtKB"/>
</dbReference>
<dbReference type="GO" id="GO:0032211">
    <property type="term" value="P:negative regulation of telomere maintenance via telomerase"/>
    <property type="evidence" value="ECO:0007669"/>
    <property type="project" value="Ensembl"/>
</dbReference>
<dbReference type="GO" id="GO:0000122">
    <property type="term" value="P:negative regulation of transcription by RNA polymerase II"/>
    <property type="evidence" value="ECO:0000250"/>
    <property type="project" value="UniProtKB"/>
</dbReference>
<dbReference type="GO" id="GO:0034244">
    <property type="term" value="P:negative regulation of transcription elongation by RNA polymerase II"/>
    <property type="evidence" value="ECO:0000250"/>
    <property type="project" value="UniProtKB"/>
</dbReference>
<dbReference type="GO" id="GO:1902425">
    <property type="term" value="P:positive regulation of attachment of mitotic spindle microtubules to kinetochore"/>
    <property type="evidence" value="ECO:0000250"/>
    <property type="project" value="UniProtKB"/>
</dbReference>
<dbReference type="GO" id="GO:0090336">
    <property type="term" value="P:positive regulation of brown fat cell differentiation"/>
    <property type="evidence" value="ECO:0000315"/>
    <property type="project" value="UniProtKB"/>
</dbReference>
<dbReference type="GO" id="GO:2000767">
    <property type="term" value="P:positive regulation of cytoplasmic translation"/>
    <property type="evidence" value="ECO:0000266"/>
    <property type="project" value="ComplexPortal"/>
</dbReference>
<dbReference type="GO" id="GO:2000373">
    <property type="term" value="P:positive regulation of DNA topoisomerase (ATP-hydrolyzing) activity"/>
    <property type="evidence" value="ECO:0000250"/>
    <property type="project" value="UniProtKB"/>
</dbReference>
<dbReference type="GO" id="GO:2000648">
    <property type="term" value="P:positive regulation of stem cell proliferation"/>
    <property type="evidence" value="ECO:0000315"/>
    <property type="project" value="UniProtKB"/>
</dbReference>
<dbReference type="GO" id="GO:0045944">
    <property type="term" value="P:positive regulation of transcription by RNA polymerase II"/>
    <property type="evidence" value="ECO:0000314"/>
    <property type="project" value="UniProtKB"/>
</dbReference>
<dbReference type="GO" id="GO:1902889">
    <property type="term" value="P:protein localization to spindle microtubule"/>
    <property type="evidence" value="ECO:0000250"/>
    <property type="project" value="UniProtKB"/>
</dbReference>
<dbReference type="GO" id="GO:0060816">
    <property type="term" value="P:random inactivation of X chromosome"/>
    <property type="evidence" value="ECO:0000315"/>
    <property type="project" value="FlyBase"/>
</dbReference>
<dbReference type="GO" id="GO:0000381">
    <property type="term" value="P:regulation of alternative mRNA splicing, via spliceosome"/>
    <property type="evidence" value="ECO:0000250"/>
    <property type="project" value="UniProtKB"/>
</dbReference>
<dbReference type="GO" id="GO:1902275">
    <property type="term" value="P:regulation of chromatin organization"/>
    <property type="evidence" value="ECO:0000250"/>
    <property type="project" value="UniProtKB"/>
</dbReference>
<dbReference type="GO" id="GO:0007346">
    <property type="term" value="P:regulation of mitotic cell cycle"/>
    <property type="evidence" value="ECO:0000250"/>
    <property type="project" value="UniProtKB"/>
</dbReference>
<dbReference type="GO" id="GO:1901673">
    <property type="term" value="P:regulation of mitotic spindle assembly"/>
    <property type="evidence" value="ECO:0000250"/>
    <property type="project" value="UniProtKB"/>
</dbReference>
<dbReference type="GO" id="GO:0031048">
    <property type="term" value="P:regulatory ncRNA-mediated heterochromatin formation"/>
    <property type="evidence" value="ECO:0007669"/>
    <property type="project" value="Ensembl"/>
</dbReference>
<dbReference type="GO" id="GO:1990280">
    <property type="term" value="P:RNA localization to chromatin"/>
    <property type="evidence" value="ECO:0000315"/>
    <property type="project" value="UniProtKB"/>
</dbReference>
<dbReference type="GO" id="GO:0008380">
    <property type="term" value="P:RNA splicing"/>
    <property type="evidence" value="ECO:0007669"/>
    <property type="project" value="UniProtKB-KW"/>
</dbReference>
<dbReference type="CDD" id="cd12884">
    <property type="entry name" value="SPRY_hnRNP"/>
    <property type="match status" value="1"/>
</dbReference>
<dbReference type="FunFam" id="1.10.720.30:FF:000004">
    <property type="entry name" value="heterogeneous nuclear ribonucleoprotein U isoform X1"/>
    <property type="match status" value="1"/>
</dbReference>
<dbReference type="FunFam" id="2.60.120.920:FF:000006">
    <property type="entry name" value="heterogeneous nuclear ribonucleoprotein U isoform X1"/>
    <property type="match status" value="1"/>
</dbReference>
<dbReference type="FunFam" id="3.40.50.300:FF:000376">
    <property type="entry name" value="Putative heterogeneous nuclear ribonucleoprotein U"/>
    <property type="match status" value="1"/>
</dbReference>
<dbReference type="Gene3D" id="2.60.120.920">
    <property type="match status" value="1"/>
</dbReference>
<dbReference type="Gene3D" id="3.40.50.300">
    <property type="entry name" value="P-loop containing nucleotide triphosphate hydrolases"/>
    <property type="match status" value="1"/>
</dbReference>
<dbReference type="Gene3D" id="1.10.720.30">
    <property type="entry name" value="SAP domain"/>
    <property type="match status" value="1"/>
</dbReference>
<dbReference type="InterPro" id="IPR001870">
    <property type="entry name" value="B30.2/SPRY"/>
</dbReference>
<dbReference type="InterPro" id="IPR043136">
    <property type="entry name" value="B30.2/SPRY_sf"/>
</dbReference>
<dbReference type="InterPro" id="IPR013320">
    <property type="entry name" value="ConA-like_dom_sf"/>
</dbReference>
<dbReference type="InterPro" id="IPR027417">
    <property type="entry name" value="P-loop_NTPase"/>
</dbReference>
<dbReference type="InterPro" id="IPR003034">
    <property type="entry name" value="SAP_dom"/>
</dbReference>
<dbReference type="InterPro" id="IPR036361">
    <property type="entry name" value="SAP_dom_sf"/>
</dbReference>
<dbReference type="InterPro" id="IPR003877">
    <property type="entry name" value="SPRY_dom"/>
</dbReference>
<dbReference type="InterPro" id="IPR035778">
    <property type="entry name" value="SPRY_hnRNP_U"/>
</dbReference>
<dbReference type="PANTHER" id="PTHR12381:SF11">
    <property type="entry name" value="HETEROGENEOUS NUCLEAR RIBONUCLEOPROTEIN U"/>
    <property type="match status" value="1"/>
</dbReference>
<dbReference type="PANTHER" id="PTHR12381">
    <property type="entry name" value="HETEROGENEOUS NUCLEAR RIBONUCLEOPROTEIN U FAMILY MEMBER"/>
    <property type="match status" value="1"/>
</dbReference>
<dbReference type="Pfam" id="PF13671">
    <property type="entry name" value="AAA_33"/>
    <property type="match status" value="1"/>
</dbReference>
<dbReference type="Pfam" id="PF02037">
    <property type="entry name" value="SAP"/>
    <property type="match status" value="1"/>
</dbReference>
<dbReference type="Pfam" id="PF00622">
    <property type="entry name" value="SPRY"/>
    <property type="match status" value="1"/>
</dbReference>
<dbReference type="SMART" id="SM00513">
    <property type="entry name" value="SAP"/>
    <property type="match status" value="1"/>
</dbReference>
<dbReference type="SMART" id="SM00449">
    <property type="entry name" value="SPRY"/>
    <property type="match status" value="1"/>
</dbReference>
<dbReference type="SUPFAM" id="SSF49899">
    <property type="entry name" value="Concanavalin A-like lectins/glucanases"/>
    <property type="match status" value="1"/>
</dbReference>
<dbReference type="SUPFAM" id="SSF52540">
    <property type="entry name" value="P-loop containing nucleoside triphosphate hydrolases"/>
    <property type="match status" value="1"/>
</dbReference>
<dbReference type="SUPFAM" id="SSF68906">
    <property type="entry name" value="SAP domain"/>
    <property type="match status" value="1"/>
</dbReference>
<dbReference type="PROSITE" id="PS50188">
    <property type="entry name" value="B302_SPRY"/>
    <property type="match status" value="1"/>
</dbReference>
<dbReference type="PROSITE" id="PS50800">
    <property type="entry name" value="SAP"/>
    <property type="match status" value="1"/>
</dbReference>
<keyword id="KW-0007">Acetylation</keyword>
<keyword id="KW-0010">Activator</keyword>
<keyword id="KW-0013">ADP-ribosylation</keyword>
<keyword id="KW-0025">Alternative splicing</keyword>
<keyword id="KW-0067">ATP-binding</keyword>
<keyword id="KW-0090">Biological rhythms</keyword>
<keyword id="KW-0131">Cell cycle</keyword>
<keyword id="KW-0132">Cell division</keyword>
<keyword id="KW-0137">Centromere</keyword>
<keyword id="KW-0156">Chromatin regulator</keyword>
<keyword id="KW-0158">Chromosome</keyword>
<keyword id="KW-0164">Citrullination</keyword>
<keyword id="KW-0175">Coiled coil</keyword>
<keyword id="KW-0963">Cytoplasm</keyword>
<keyword id="KW-0206">Cytoskeleton</keyword>
<keyword id="KW-0217">Developmental protein</keyword>
<keyword id="KW-0221">Differentiation</keyword>
<keyword id="KW-0238">DNA-binding</keyword>
<keyword id="KW-1017">Isopeptide bond</keyword>
<keyword id="KW-0995">Kinetochore</keyword>
<keyword id="KW-0488">Methylation</keyword>
<keyword id="KW-0498">Mitosis</keyword>
<keyword id="KW-0507">mRNA processing</keyword>
<keyword id="KW-0508">mRNA splicing</keyword>
<keyword id="KW-0547">Nucleotide-binding</keyword>
<keyword id="KW-0539">Nucleus</keyword>
<keyword id="KW-0597">Phosphoprotein</keyword>
<keyword id="KW-1185">Reference proteome</keyword>
<keyword id="KW-0678">Repressor</keyword>
<keyword id="KW-0687">Ribonucleoprotein</keyword>
<keyword id="KW-0694">RNA-binding</keyword>
<keyword id="KW-0747">Spliceosome</keyword>
<keyword id="KW-0804">Transcription</keyword>
<keyword id="KW-0805">Transcription regulation</keyword>
<keyword id="KW-0832">Ubl conjugation</keyword>
<protein>
    <recommendedName>
        <fullName evidence="18">Heterogeneous nuclear ribonucleoprotein U</fullName>
        <shortName evidence="17">hnRNP U</shortName>
    </recommendedName>
    <alternativeName>
        <fullName evidence="16">Scaffold-attachment factor A</fullName>
        <shortName evidence="16">SAF-A</shortName>
    </alternativeName>
</protein>